<keyword id="KW-1185">Reference proteome</keyword>
<organism>
    <name type="scientific">Xenopus tropicalis</name>
    <name type="common">Western clawed frog</name>
    <name type="synonym">Silurana tropicalis</name>
    <dbReference type="NCBI Taxonomy" id="8364"/>
    <lineage>
        <taxon>Eukaryota</taxon>
        <taxon>Metazoa</taxon>
        <taxon>Chordata</taxon>
        <taxon>Craniata</taxon>
        <taxon>Vertebrata</taxon>
        <taxon>Euteleostomi</taxon>
        <taxon>Amphibia</taxon>
        <taxon>Batrachia</taxon>
        <taxon>Anura</taxon>
        <taxon>Pipoidea</taxon>
        <taxon>Pipidae</taxon>
        <taxon>Xenopodinae</taxon>
        <taxon>Xenopus</taxon>
        <taxon>Silurana</taxon>
    </lineage>
</organism>
<reference key="1">
    <citation type="submission" date="2005-02" db="EMBL/GenBank/DDBJ databases">
        <authorList>
            <consortium name="NIH - Xenopus Gene Collection (XGC) project"/>
        </authorList>
    </citation>
    <scope>NUCLEOTIDE SEQUENCE [LARGE SCALE MRNA]</scope>
    <source>
        <tissue>Embryo</tissue>
    </source>
</reference>
<protein>
    <recommendedName>
        <fullName>Aspartate dehydrogenase domain-containing protein</fullName>
    </recommendedName>
</protein>
<accession>Q5FW48</accession>
<proteinExistence type="evidence at transcript level"/>
<name>ASPDH_XENTR</name>
<evidence type="ECO:0000305" key="1"/>
<dbReference type="EMBL" id="BC089631">
    <property type="protein sequence ID" value="AAH89631.1"/>
    <property type="molecule type" value="mRNA"/>
</dbReference>
<dbReference type="RefSeq" id="NP_001015700.1">
    <property type="nucleotide sequence ID" value="NM_001015700.1"/>
</dbReference>
<dbReference type="SMR" id="Q5FW48"/>
<dbReference type="FunCoup" id="Q5FW48">
    <property type="interactions" value="165"/>
</dbReference>
<dbReference type="DNASU" id="548417"/>
<dbReference type="GeneID" id="548417"/>
<dbReference type="KEGG" id="xtr:548417"/>
<dbReference type="CTD" id="554235"/>
<dbReference type="Xenbase" id="XB-GENE-6454901">
    <property type="gene designation" value="aspdh"/>
</dbReference>
<dbReference type="InParanoid" id="Q5FW48"/>
<dbReference type="OrthoDB" id="4310724at2759"/>
<dbReference type="Proteomes" id="UP000008143">
    <property type="component" value="Chromosome 7"/>
</dbReference>
<dbReference type="GO" id="GO:0033735">
    <property type="term" value="F:aspartate dehydrogenase activity"/>
    <property type="evidence" value="ECO:0007669"/>
    <property type="project" value="UniProtKB-EC"/>
</dbReference>
<dbReference type="GO" id="GO:0050661">
    <property type="term" value="F:NADP binding"/>
    <property type="evidence" value="ECO:0007669"/>
    <property type="project" value="InterPro"/>
</dbReference>
<dbReference type="GO" id="GO:0009435">
    <property type="term" value="P:NAD biosynthetic process"/>
    <property type="evidence" value="ECO:0007669"/>
    <property type="project" value="InterPro"/>
</dbReference>
<dbReference type="Gene3D" id="3.30.360.10">
    <property type="entry name" value="Dihydrodipicolinate Reductase, domain 2"/>
    <property type="match status" value="1"/>
</dbReference>
<dbReference type="Gene3D" id="3.40.50.720">
    <property type="entry name" value="NAD(P)-binding Rossmann-like Domain"/>
    <property type="match status" value="1"/>
</dbReference>
<dbReference type="InterPro" id="IPR005106">
    <property type="entry name" value="Asp/hSer_DH_NAD-bd"/>
</dbReference>
<dbReference type="InterPro" id="IPR002811">
    <property type="entry name" value="Asp_DH"/>
</dbReference>
<dbReference type="InterPro" id="IPR011182">
    <property type="entry name" value="L-Asp_DH"/>
</dbReference>
<dbReference type="InterPro" id="IPR036291">
    <property type="entry name" value="NAD(P)-bd_dom_sf"/>
</dbReference>
<dbReference type="PANTHER" id="PTHR31873:SF6">
    <property type="entry name" value="ASPARTATE DEHYDROGENASE DOMAIN-CONTAINING PROTEIN"/>
    <property type="match status" value="1"/>
</dbReference>
<dbReference type="PANTHER" id="PTHR31873">
    <property type="entry name" value="L-ASPARTATE DEHYDROGENASE-RELATED"/>
    <property type="match status" value="1"/>
</dbReference>
<dbReference type="Pfam" id="PF01958">
    <property type="entry name" value="Asp_DH_C"/>
    <property type="match status" value="1"/>
</dbReference>
<dbReference type="Pfam" id="PF03447">
    <property type="entry name" value="NAD_binding_3"/>
    <property type="match status" value="1"/>
</dbReference>
<dbReference type="PIRSF" id="PIRSF005227">
    <property type="entry name" value="Asp_dh_NAD_syn"/>
    <property type="match status" value="1"/>
</dbReference>
<dbReference type="SUPFAM" id="SSF55347">
    <property type="entry name" value="Glyceraldehyde-3-phosphate dehydrogenase-like, C-terminal domain"/>
    <property type="match status" value="1"/>
</dbReference>
<dbReference type="SUPFAM" id="SSF51735">
    <property type="entry name" value="NAD(P)-binding Rossmann-fold domains"/>
    <property type="match status" value="1"/>
</dbReference>
<feature type="chain" id="PRO_0000144904" description="Aspartate dehydrogenase domain-containing protein">
    <location>
        <begin position="1"/>
        <end position="284"/>
    </location>
</feature>
<comment type="similarity">
    <text evidence="1">Belongs to the L-aspartate dehydrogenase family.</text>
</comment>
<sequence>MSEERRMRIGVVGYGHIGKYLVDKIVREGANHSMELAFVWNRRREKLSGAVDPRLQLQDLSDCQKWAADLIVEVAHPCITREYGEKFLSVAHFLVGSPTALADTVTEAKLRERARLSGNTLYVPCGALWGAEDIFKMAERGTLKALRITMTKHPNSFKLEGDLVQKNQEAMSNRTVLYEGPVRGLCPLAPNNVNTMAAACMAAHTLGFDGVVGVLVSDPSVPDWHFVDIEVTGGTIEKTGQVFSVKTSRRNPAAPCSVTGSATFASFWSSLLACKGHGGRVYIC</sequence>
<gene>
    <name type="primary">aspdh</name>
</gene>